<evidence type="ECO:0000269" key="1">
    <source>
    </source>
</evidence>
<evidence type="ECO:0000305" key="2"/>
<organism>
    <name type="scientific">Malonomonas rubra</name>
    <dbReference type="NCBI Taxonomy" id="57040"/>
    <lineage>
        <taxon>Bacteria</taxon>
        <taxon>Pseudomonadati</taxon>
        <taxon>Thermodesulfobacteriota</taxon>
        <taxon>Desulfuromonadia</taxon>
        <taxon>Desulfuromonadales</taxon>
        <taxon>Geopsychrobacteraceae</taxon>
        <taxon>Malonomonas</taxon>
    </lineage>
</organism>
<name>MADH_MALRU</name>
<comment type="function">
    <text evidence="1">Acyl-carrier protein (ACP) acetate ligase of the biotin-dependent malonate decarboxylase multienzyme complex (EC 7.2.4.4). Involved in the conversion of the thiol group of the ACP-bound 2'-(5-phosphoribosyl)-3'-dephospho-CoA prosthetic group into its acetyl thioester using the energy from the hydrolysis of ATP.</text>
</comment>
<comment type="catalytic activity">
    <reaction evidence="1">
        <text>holo-[ACP] + acetate + ATP = acetyl-[ACP] + AMP + diphosphate</text>
        <dbReference type="Rhea" id="RHEA:31339"/>
        <dbReference type="Rhea" id="RHEA-COMP:9621"/>
        <dbReference type="Rhea" id="RHEA-COMP:9685"/>
        <dbReference type="ChEBI" id="CHEBI:30089"/>
        <dbReference type="ChEBI" id="CHEBI:30616"/>
        <dbReference type="ChEBI" id="CHEBI:33019"/>
        <dbReference type="ChEBI" id="CHEBI:64479"/>
        <dbReference type="ChEBI" id="CHEBI:78446"/>
        <dbReference type="ChEBI" id="CHEBI:456215"/>
        <dbReference type="EC" id="6.2.1.35"/>
    </reaction>
</comment>
<comment type="subcellular location">
    <subcellularLocation>
        <location evidence="2">Cytoplasm</location>
    </subcellularLocation>
</comment>
<protein>
    <recommendedName>
        <fullName>ACP-SH:acetate ligase</fullName>
        <ecNumber>6.2.1.35</ecNumber>
    </recommendedName>
    <alternativeName>
        <fullName>[Acyl-carrier protein]:acetate ligase</fullName>
    </alternativeName>
</protein>
<gene>
    <name type="primary">madH</name>
</gene>
<proteinExistence type="evidence at protein level"/>
<dbReference type="EC" id="6.2.1.35"/>
<dbReference type="EMBL" id="U87980">
    <property type="protein sequence ID" value="AAC45404.1"/>
    <property type="molecule type" value="Genomic_DNA"/>
</dbReference>
<dbReference type="SMR" id="O06928"/>
<dbReference type="KEGG" id="ag:AAC45404"/>
<dbReference type="BioCyc" id="MetaCyc:MONOMER-14253"/>
<dbReference type="GO" id="GO:0005737">
    <property type="term" value="C:cytoplasm"/>
    <property type="evidence" value="ECO:0007669"/>
    <property type="project" value="UniProtKB-SubCell"/>
</dbReference>
<dbReference type="GO" id="GO:0016874">
    <property type="term" value="F:ligase activity"/>
    <property type="evidence" value="ECO:0007669"/>
    <property type="project" value="UniProtKB-KW"/>
</dbReference>
<dbReference type="Gene3D" id="3.40.50.12780">
    <property type="entry name" value="N-terminal domain of ligase-like"/>
    <property type="match status" value="1"/>
</dbReference>
<dbReference type="InterPro" id="IPR042099">
    <property type="entry name" value="ANL_N_sf"/>
</dbReference>
<dbReference type="SUPFAM" id="SSF56801">
    <property type="entry name" value="Acetyl-CoA synthetase-like"/>
    <property type="match status" value="1"/>
</dbReference>
<accession>O06928</accession>
<keyword id="KW-0963">Cytoplasm</keyword>
<keyword id="KW-0436">Ligase</keyword>
<reference key="1">
    <citation type="journal article" date="1997" name="Eur. J. Biochem.">
        <title>Sequence of a gene cluster from Malonomonas rubra encoding components of the malonate decarboxylase Na+ pump and evidence for their function.</title>
        <authorList>
            <person name="Berg M."/>
            <person name="Hilbi H."/>
            <person name="Dimroth P."/>
        </authorList>
    </citation>
    <scope>NUCLEOTIDE SEQUENCE [GENOMIC DNA]</scope>
    <scope>CHARACTERIZATION</scope>
</reference>
<reference key="2">
    <citation type="journal article" date="1996" name="Biochemistry">
        <title>The acyl carrier protein of malonate decarboxylase of Malonomonas rubra contains 2'-(5''-phosphoribosyl)-3'-dephosphocoenzyme A as a prosthetic group.</title>
        <authorList>
            <person name="Berg M."/>
            <person name="Hilbi H."/>
            <person name="Dimroth P."/>
        </authorList>
    </citation>
    <scope>FUNCTION</scope>
    <scope>CATALYTIC ACTIVITY</scope>
</reference>
<sequence length="366" mass="40347">MAEQLKELAEMVESFGTAPTMGEMPCRTLATKGINGPTAAHVIEEIHTPFNLAYVTFTTGSTAFQNVVGVTHSEIDGRVRASLAAFDMANVERHGKFLVTYAPLVNVFSAEALKIHGLDWFFLQRSSRDAFLLSLCQEKPNVLIGESTFIRSALEDASVLGLSHSIPQGVIAFTAGTPLDLDLLQVAEKHNWKIHDLYGCQEFGWLTLDGVPLRADITLIPSPKGSDFREFVVGGLPMADSFPYAESGHVCNPEGKIITYRRARTNPEYEVIVRETKLSSKETTERVARTILRIKGRVVKVDPALKVSSTKTVLDLVPSVSAEGKSTSESYRIEGDDKTFLFETLIEAQLALQQTAKTDQVWKKTR</sequence>
<feature type="chain" id="PRO_0000424277" description="ACP-SH:acetate ligase">
    <location>
        <begin position="1"/>
        <end position="366"/>
    </location>
</feature>